<feature type="chain" id="PRO_0000142259" description="Imidazole glycerol phosphate synthase subunit HisF">
    <location>
        <begin position="1"/>
        <end position="257"/>
    </location>
</feature>
<feature type="active site" evidence="1">
    <location>
        <position position="11"/>
    </location>
</feature>
<feature type="active site" evidence="1">
    <location>
        <position position="130"/>
    </location>
</feature>
<organism>
    <name type="scientific">Vibrio parahaemolyticus serotype O3:K6 (strain RIMD 2210633)</name>
    <dbReference type="NCBI Taxonomy" id="223926"/>
    <lineage>
        <taxon>Bacteria</taxon>
        <taxon>Pseudomonadati</taxon>
        <taxon>Pseudomonadota</taxon>
        <taxon>Gammaproteobacteria</taxon>
        <taxon>Vibrionales</taxon>
        <taxon>Vibrionaceae</taxon>
        <taxon>Vibrio</taxon>
    </lineage>
</organism>
<dbReference type="EC" id="4.3.2.10" evidence="1"/>
<dbReference type="EMBL" id="BA000031">
    <property type="protein sequence ID" value="BAC59406.1"/>
    <property type="molecule type" value="Genomic_DNA"/>
</dbReference>
<dbReference type="RefSeq" id="NP_797522.1">
    <property type="nucleotide sequence ID" value="NC_004603.1"/>
</dbReference>
<dbReference type="RefSeq" id="WP_005459998.1">
    <property type="nucleotide sequence ID" value="NC_004603.1"/>
</dbReference>
<dbReference type="SMR" id="Q87QK6"/>
<dbReference type="GeneID" id="1188648"/>
<dbReference type="KEGG" id="vpa:VP1143"/>
<dbReference type="PATRIC" id="fig|223926.6.peg.1085"/>
<dbReference type="eggNOG" id="COG0107">
    <property type="taxonomic scope" value="Bacteria"/>
</dbReference>
<dbReference type="HOGENOM" id="CLU_048577_4_0_6"/>
<dbReference type="UniPathway" id="UPA00031">
    <property type="reaction ID" value="UER00010"/>
</dbReference>
<dbReference type="Proteomes" id="UP000002493">
    <property type="component" value="Chromosome 1"/>
</dbReference>
<dbReference type="GO" id="GO:0005737">
    <property type="term" value="C:cytoplasm"/>
    <property type="evidence" value="ECO:0007669"/>
    <property type="project" value="UniProtKB-SubCell"/>
</dbReference>
<dbReference type="GO" id="GO:0000107">
    <property type="term" value="F:imidazoleglycerol-phosphate synthase activity"/>
    <property type="evidence" value="ECO:0007669"/>
    <property type="project" value="UniProtKB-UniRule"/>
</dbReference>
<dbReference type="GO" id="GO:0016829">
    <property type="term" value="F:lyase activity"/>
    <property type="evidence" value="ECO:0007669"/>
    <property type="project" value="UniProtKB-KW"/>
</dbReference>
<dbReference type="GO" id="GO:0000105">
    <property type="term" value="P:L-histidine biosynthetic process"/>
    <property type="evidence" value="ECO:0007669"/>
    <property type="project" value="UniProtKB-UniRule"/>
</dbReference>
<dbReference type="CDD" id="cd04731">
    <property type="entry name" value="HisF"/>
    <property type="match status" value="1"/>
</dbReference>
<dbReference type="FunFam" id="3.20.20.70:FF:000006">
    <property type="entry name" value="Imidazole glycerol phosphate synthase subunit HisF"/>
    <property type="match status" value="1"/>
</dbReference>
<dbReference type="Gene3D" id="3.20.20.70">
    <property type="entry name" value="Aldolase class I"/>
    <property type="match status" value="1"/>
</dbReference>
<dbReference type="HAMAP" id="MF_01013">
    <property type="entry name" value="HisF"/>
    <property type="match status" value="1"/>
</dbReference>
<dbReference type="InterPro" id="IPR013785">
    <property type="entry name" value="Aldolase_TIM"/>
</dbReference>
<dbReference type="InterPro" id="IPR006062">
    <property type="entry name" value="His_biosynth"/>
</dbReference>
<dbReference type="InterPro" id="IPR004651">
    <property type="entry name" value="HisF"/>
</dbReference>
<dbReference type="InterPro" id="IPR050064">
    <property type="entry name" value="IGPS_HisA/HisF"/>
</dbReference>
<dbReference type="InterPro" id="IPR011060">
    <property type="entry name" value="RibuloseP-bd_barrel"/>
</dbReference>
<dbReference type="NCBIfam" id="TIGR00735">
    <property type="entry name" value="hisF"/>
    <property type="match status" value="1"/>
</dbReference>
<dbReference type="PANTHER" id="PTHR21235:SF2">
    <property type="entry name" value="IMIDAZOLE GLYCEROL PHOSPHATE SYNTHASE HISHF"/>
    <property type="match status" value="1"/>
</dbReference>
<dbReference type="PANTHER" id="PTHR21235">
    <property type="entry name" value="IMIDAZOLE GLYCEROL PHOSPHATE SYNTHASE SUBUNIT HISF/H IGP SYNTHASE SUBUNIT HISF/H"/>
    <property type="match status" value="1"/>
</dbReference>
<dbReference type="Pfam" id="PF00977">
    <property type="entry name" value="His_biosynth"/>
    <property type="match status" value="1"/>
</dbReference>
<dbReference type="SUPFAM" id="SSF51366">
    <property type="entry name" value="Ribulose-phoshate binding barrel"/>
    <property type="match status" value="1"/>
</dbReference>
<protein>
    <recommendedName>
        <fullName evidence="1">Imidazole glycerol phosphate synthase subunit HisF</fullName>
        <ecNumber evidence="1">4.3.2.10</ecNumber>
    </recommendedName>
    <alternativeName>
        <fullName evidence="1">IGP synthase cyclase subunit</fullName>
    </alternativeName>
    <alternativeName>
        <fullName evidence="1">IGP synthase subunit HisF</fullName>
    </alternativeName>
    <alternativeName>
        <fullName evidence="1">ImGP synthase subunit HisF</fullName>
        <shortName evidence="1">IGPS subunit HisF</shortName>
    </alternativeName>
</protein>
<proteinExistence type="inferred from homology"/>
<comment type="function">
    <text evidence="1">IGPS catalyzes the conversion of PRFAR and glutamine to IGP, AICAR and glutamate. The HisF subunit catalyzes the cyclization activity that produces IGP and AICAR from PRFAR using the ammonia provided by the HisH subunit.</text>
</comment>
<comment type="catalytic activity">
    <reaction evidence="1">
        <text>5-[(5-phospho-1-deoxy-D-ribulos-1-ylimino)methylamino]-1-(5-phospho-beta-D-ribosyl)imidazole-4-carboxamide + L-glutamine = D-erythro-1-(imidazol-4-yl)glycerol 3-phosphate + 5-amino-1-(5-phospho-beta-D-ribosyl)imidazole-4-carboxamide + L-glutamate + H(+)</text>
        <dbReference type="Rhea" id="RHEA:24793"/>
        <dbReference type="ChEBI" id="CHEBI:15378"/>
        <dbReference type="ChEBI" id="CHEBI:29985"/>
        <dbReference type="ChEBI" id="CHEBI:58278"/>
        <dbReference type="ChEBI" id="CHEBI:58359"/>
        <dbReference type="ChEBI" id="CHEBI:58475"/>
        <dbReference type="ChEBI" id="CHEBI:58525"/>
        <dbReference type="EC" id="4.3.2.10"/>
    </reaction>
</comment>
<comment type="pathway">
    <text evidence="1">Amino-acid biosynthesis; L-histidine biosynthesis; L-histidine from 5-phospho-alpha-D-ribose 1-diphosphate: step 5/9.</text>
</comment>
<comment type="subunit">
    <text evidence="1">Heterodimer of HisH and HisF.</text>
</comment>
<comment type="subcellular location">
    <subcellularLocation>
        <location evidence="1">Cytoplasm</location>
    </subcellularLocation>
</comment>
<comment type="similarity">
    <text evidence="1">Belongs to the HisA/HisF family.</text>
</comment>
<name>HIS6_VIBPA</name>
<reference key="1">
    <citation type="journal article" date="2003" name="Lancet">
        <title>Genome sequence of Vibrio parahaemolyticus: a pathogenic mechanism distinct from that of V. cholerae.</title>
        <authorList>
            <person name="Makino K."/>
            <person name="Oshima K."/>
            <person name="Kurokawa K."/>
            <person name="Yokoyama K."/>
            <person name="Uda T."/>
            <person name="Tagomori K."/>
            <person name="Iijima Y."/>
            <person name="Najima M."/>
            <person name="Nakano M."/>
            <person name="Yamashita A."/>
            <person name="Kubota Y."/>
            <person name="Kimura S."/>
            <person name="Yasunaga T."/>
            <person name="Honda T."/>
            <person name="Shinagawa H."/>
            <person name="Hattori M."/>
            <person name="Iida T."/>
        </authorList>
    </citation>
    <scope>NUCLEOTIDE SEQUENCE [LARGE SCALE GENOMIC DNA]</scope>
    <source>
        <strain>RIMD 2210633</strain>
    </source>
</reference>
<gene>
    <name evidence="1" type="primary">hisF</name>
    <name type="ordered locus">VP1143</name>
</gene>
<keyword id="KW-0028">Amino-acid biosynthesis</keyword>
<keyword id="KW-0963">Cytoplasm</keyword>
<keyword id="KW-0368">Histidine biosynthesis</keyword>
<keyword id="KW-0456">Lyase</keyword>
<accession>Q87QK6</accession>
<sequence>MLAKRIIPCLDVRDGQVVKGVQFRNHEIIGDIVPLAKRYAEEGADELVFYDITASSDGRVVDKSWVARVAEVIDIPFCVAGGIKSAEDAARILEFGADKVSINSPALANPQLITDLADKFGVQCIVVGIDSYYDKDTGKYQVYQFTGDEERTKATKWETRDWVQEVQKRGAGEIVLNMMNQDGVRSGYDIEQLNMVREVCKVPLIASGGAGAMEHFAEAYQKANVDGALAASVFHKQVINIGELKQYLKQQGIEVRL</sequence>
<evidence type="ECO:0000255" key="1">
    <source>
        <dbReference type="HAMAP-Rule" id="MF_01013"/>
    </source>
</evidence>